<evidence type="ECO:0000255" key="1">
    <source>
        <dbReference type="PROSITE-ProRule" id="PRU00159"/>
    </source>
</evidence>
<evidence type="ECO:0000255" key="2">
    <source>
        <dbReference type="PROSITE-ProRule" id="PRU00212"/>
    </source>
</evidence>
<evidence type="ECO:0000255" key="3">
    <source>
        <dbReference type="PROSITE-ProRule" id="PRU00565"/>
    </source>
</evidence>
<evidence type="ECO:0000256" key="4">
    <source>
        <dbReference type="SAM" id="MobiDB-lite"/>
    </source>
</evidence>
<evidence type="ECO:0000305" key="5"/>
<reference key="1">
    <citation type="journal article" date="2005" name="Nature">
        <title>The genome of the social amoeba Dictyostelium discoideum.</title>
        <authorList>
            <person name="Eichinger L."/>
            <person name="Pachebat J.A."/>
            <person name="Gloeckner G."/>
            <person name="Rajandream M.A."/>
            <person name="Sucgang R."/>
            <person name="Berriman M."/>
            <person name="Song J."/>
            <person name="Olsen R."/>
            <person name="Szafranski K."/>
            <person name="Xu Q."/>
            <person name="Tunggal B."/>
            <person name="Kummerfeld S."/>
            <person name="Madera M."/>
            <person name="Konfortov B.A."/>
            <person name="Rivero F."/>
            <person name="Bankier A.T."/>
            <person name="Lehmann R."/>
            <person name="Hamlin N."/>
            <person name="Davies R."/>
            <person name="Gaudet P."/>
            <person name="Fey P."/>
            <person name="Pilcher K."/>
            <person name="Chen G."/>
            <person name="Saunders D."/>
            <person name="Sodergren E.J."/>
            <person name="Davis P."/>
            <person name="Kerhornou A."/>
            <person name="Nie X."/>
            <person name="Hall N."/>
            <person name="Anjard C."/>
            <person name="Hemphill L."/>
            <person name="Bason N."/>
            <person name="Farbrother P."/>
            <person name="Desany B."/>
            <person name="Just E."/>
            <person name="Morio T."/>
            <person name="Rost R."/>
            <person name="Churcher C.M."/>
            <person name="Cooper J."/>
            <person name="Haydock S."/>
            <person name="van Driessche N."/>
            <person name="Cronin A."/>
            <person name="Goodhead I."/>
            <person name="Muzny D.M."/>
            <person name="Mourier T."/>
            <person name="Pain A."/>
            <person name="Lu M."/>
            <person name="Harper D."/>
            <person name="Lindsay R."/>
            <person name="Hauser H."/>
            <person name="James K.D."/>
            <person name="Quiles M."/>
            <person name="Madan Babu M."/>
            <person name="Saito T."/>
            <person name="Buchrieser C."/>
            <person name="Wardroper A."/>
            <person name="Felder M."/>
            <person name="Thangavelu M."/>
            <person name="Johnson D."/>
            <person name="Knights A."/>
            <person name="Loulseged H."/>
            <person name="Mungall K.L."/>
            <person name="Oliver K."/>
            <person name="Price C."/>
            <person name="Quail M.A."/>
            <person name="Urushihara H."/>
            <person name="Hernandez J."/>
            <person name="Rabbinowitsch E."/>
            <person name="Steffen D."/>
            <person name="Sanders M."/>
            <person name="Ma J."/>
            <person name="Kohara Y."/>
            <person name="Sharp S."/>
            <person name="Simmonds M.N."/>
            <person name="Spiegler S."/>
            <person name="Tivey A."/>
            <person name="Sugano S."/>
            <person name="White B."/>
            <person name="Walker D."/>
            <person name="Woodward J.R."/>
            <person name="Winckler T."/>
            <person name="Tanaka Y."/>
            <person name="Shaulsky G."/>
            <person name="Schleicher M."/>
            <person name="Weinstock G.M."/>
            <person name="Rosenthal A."/>
            <person name="Cox E.C."/>
            <person name="Chisholm R.L."/>
            <person name="Gibbs R.A."/>
            <person name="Loomis W.F."/>
            <person name="Platzer M."/>
            <person name="Kay R.R."/>
            <person name="Williams J.G."/>
            <person name="Dear P.H."/>
            <person name="Noegel A.A."/>
            <person name="Barrell B.G."/>
            <person name="Kuspa A."/>
        </authorList>
    </citation>
    <scope>NUCLEOTIDE SEQUENCE [LARGE SCALE GENOMIC DNA]</scope>
    <source>
        <strain>AX4</strain>
    </source>
</reference>
<keyword id="KW-0067">ATP-binding</keyword>
<keyword id="KW-0418">Kinase</keyword>
<keyword id="KW-0547">Nucleotide-binding</keyword>
<keyword id="KW-1185">Reference proteome</keyword>
<keyword id="KW-0723">Serine/threonine-protein kinase</keyword>
<keyword id="KW-0808">Transferase</keyword>
<dbReference type="EC" id="2.7.11.1"/>
<dbReference type="EMBL" id="AAFI02000189">
    <property type="protein sequence ID" value="EAL61276.1"/>
    <property type="molecule type" value="Genomic_DNA"/>
</dbReference>
<dbReference type="RefSeq" id="XP_629689.1">
    <property type="nucleotide sequence ID" value="XM_629687.1"/>
</dbReference>
<dbReference type="SMR" id="Q54DF2"/>
<dbReference type="FunCoup" id="Q54DF2">
    <property type="interactions" value="218"/>
</dbReference>
<dbReference type="STRING" id="44689.Q54DF2"/>
<dbReference type="GlyGen" id="Q54DF2">
    <property type="glycosylation" value="1 site"/>
</dbReference>
<dbReference type="PaxDb" id="44689-DDB0216369"/>
<dbReference type="EnsemblProtists" id="EAL61276">
    <property type="protein sequence ID" value="EAL61276"/>
    <property type="gene ID" value="DDB_G0292304"/>
</dbReference>
<dbReference type="GeneID" id="8628605"/>
<dbReference type="KEGG" id="ddi:DDB_G0292304"/>
<dbReference type="dictyBase" id="DDB_G0292304">
    <property type="gene designation" value="mrkA"/>
</dbReference>
<dbReference type="VEuPathDB" id="AmoebaDB:DDB_G0292304"/>
<dbReference type="eggNOG" id="KOG0586">
    <property type="taxonomic scope" value="Eukaryota"/>
</dbReference>
<dbReference type="HOGENOM" id="CLU_289424_0_0_1"/>
<dbReference type="InParanoid" id="Q54DF2"/>
<dbReference type="OMA" id="WRYKGIC"/>
<dbReference type="PRO" id="PR:Q54DF2"/>
<dbReference type="Proteomes" id="UP000002195">
    <property type="component" value="Chromosome 6"/>
</dbReference>
<dbReference type="GO" id="GO:0005737">
    <property type="term" value="C:cytoplasm"/>
    <property type="evidence" value="ECO:0000318"/>
    <property type="project" value="GO_Central"/>
</dbReference>
<dbReference type="GO" id="GO:0005524">
    <property type="term" value="F:ATP binding"/>
    <property type="evidence" value="ECO:0007669"/>
    <property type="project" value="UniProtKB-KW"/>
</dbReference>
<dbReference type="GO" id="GO:0106310">
    <property type="term" value="F:protein serine kinase activity"/>
    <property type="evidence" value="ECO:0007669"/>
    <property type="project" value="RHEA"/>
</dbReference>
<dbReference type="GO" id="GO:0004674">
    <property type="term" value="F:protein serine/threonine kinase activity"/>
    <property type="evidence" value="ECO:0000318"/>
    <property type="project" value="GO_Central"/>
</dbReference>
<dbReference type="GO" id="GO:0035556">
    <property type="term" value="P:intracellular signal transduction"/>
    <property type="evidence" value="ECO:0000318"/>
    <property type="project" value="GO_Central"/>
</dbReference>
<dbReference type="CDD" id="cd12121">
    <property type="entry name" value="MARK_C_like"/>
    <property type="match status" value="1"/>
</dbReference>
<dbReference type="CDD" id="cd14003">
    <property type="entry name" value="STKc_AMPK-like"/>
    <property type="match status" value="1"/>
</dbReference>
<dbReference type="CDD" id="cd14272">
    <property type="entry name" value="UBA_AMPK-RKs"/>
    <property type="match status" value="1"/>
</dbReference>
<dbReference type="FunFam" id="1.10.8.10:FF:000005">
    <property type="entry name" value="Non-specific serine/threonine protein kinase"/>
    <property type="match status" value="1"/>
</dbReference>
<dbReference type="FunFam" id="3.30.200.20:FF:000003">
    <property type="entry name" value="Non-specific serine/threonine protein kinase"/>
    <property type="match status" value="1"/>
</dbReference>
<dbReference type="FunFam" id="3.30.310.80:FF:000011">
    <property type="entry name" value="Non-specific serine/threonine protein kinase"/>
    <property type="match status" value="1"/>
</dbReference>
<dbReference type="FunFam" id="1.10.510.10:FF:002170">
    <property type="entry name" value="Probable serine/threonine-protein kinase MARK-A"/>
    <property type="match status" value="1"/>
</dbReference>
<dbReference type="Gene3D" id="1.10.8.10">
    <property type="entry name" value="DNA helicase RuvA subunit, C-terminal domain"/>
    <property type="match status" value="1"/>
</dbReference>
<dbReference type="Gene3D" id="3.30.310.80">
    <property type="entry name" value="Kinase associated domain 1, KA1"/>
    <property type="match status" value="1"/>
</dbReference>
<dbReference type="Gene3D" id="1.10.510.10">
    <property type="entry name" value="Transferase(Phosphotransferase) domain 1"/>
    <property type="match status" value="1"/>
</dbReference>
<dbReference type="InterPro" id="IPR028375">
    <property type="entry name" value="KA1/Ssp2_C"/>
</dbReference>
<dbReference type="InterPro" id="IPR001772">
    <property type="entry name" value="KA1_dom"/>
</dbReference>
<dbReference type="InterPro" id="IPR011009">
    <property type="entry name" value="Kinase-like_dom_sf"/>
</dbReference>
<dbReference type="InterPro" id="IPR000719">
    <property type="entry name" value="Prot_kinase_dom"/>
</dbReference>
<dbReference type="InterPro" id="IPR017441">
    <property type="entry name" value="Protein_kinase_ATP_BS"/>
</dbReference>
<dbReference type="InterPro" id="IPR015940">
    <property type="entry name" value="UBA"/>
</dbReference>
<dbReference type="PANTHER" id="PTHR24346:SF82">
    <property type="entry name" value="KP78A-RELATED"/>
    <property type="match status" value="1"/>
</dbReference>
<dbReference type="PANTHER" id="PTHR24346">
    <property type="entry name" value="MAP/MICROTUBULE AFFINITY-REGULATING KINASE"/>
    <property type="match status" value="1"/>
</dbReference>
<dbReference type="Pfam" id="PF02149">
    <property type="entry name" value="KA1"/>
    <property type="match status" value="1"/>
</dbReference>
<dbReference type="Pfam" id="PF00069">
    <property type="entry name" value="Pkinase"/>
    <property type="match status" value="1"/>
</dbReference>
<dbReference type="SMART" id="SM00220">
    <property type="entry name" value="S_TKc"/>
    <property type="match status" value="1"/>
</dbReference>
<dbReference type="SMART" id="SM00165">
    <property type="entry name" value="UBA"/>
    <property type="match status" value="1"/>
</dbReference>
<dbReference type="SUPFAM" id="SSF103243">
    <property type="entry name" value="KA1-like"/>
    <property type="match status" value="1"/>
</dbReference>
<dbReference type="SUPFAM" id="SSF56112">
    <property type="entry name" value="Protein kinase-like (PK-like)"/>
    <property type="match status" value="1"/>
</dbReference>
<dbReference type="PROSITE" id="PS50032">
    <property type="entry name" value="KA1"/>
    <property type="match status" value="1"/>
</dbReference>
<dbReference type="PROSITE" id="PS00107">
    <property type="entry name" value="PROTEIN_KINASE_ATP"/>
    <property type="match status" value="1"/>
</dbReference>
<dbReference type="PROSITE" id="PS50011">
    <property type="entry name" value="PROTEIN_KINASE_DOM"/>
    <property type="match status" value="1"/>
</dbReference>
<dbReference type="PROSITE" id="PS50030">
    <property type="entry name" value="UBA"/>
    <property type="match status" value="1"/>
</dbReference>
<gene>
    <name type="primary">mrkA</name>
    <name type="ORF">DDB_G0292304</name>
</gene>
<comment type="catalytic activity">
    <reaction>
        <text>L-seryl-[protein] + ATP = O-phospho-L-seryl-[protein] + ADP + H(+)</text>
        <dbReference type="Rhea" id="RHEA:17989"/>
        <dbReference type="Rhea" id="RHEA-COMP:9863"/>
        <dbReference type="Rhea" id="RHEA-COMP:11604"/>
        <dbReference type="ChEBI" id="CHEBI:15378"/>
        <dbReference type="ChEBI" id="CHEBI:29999"/>
        <dbReference type="ChEBI" id="CHEBI:30616"/>
        <dbReference type="ChEBI" id="CHEBI:83421"/>
        <dbReference type="ChEBI" id="CHEBI:456216"/>
        <dbReference type="EC" id="2.7.11.1"/>
    </reaction>
</comment>
<comment type="catalytic activity">
    <reaction>
        <text>L-threonyl-[protein] + ATP = O-phospho-L-threonyl-[protein] + ADP + H(+)</text>
        <dbReference type="Rhea" id="RHEA:46608"/>
        <dbReference type="Rhea" id="RHEA-COMP:11060"/>
        <dbReference type="Rhea" id="RHEA-COMP:11605"/>
        <dbReference type="ChEBI" id="CHEBI:15378"/>
        <dbReference type="ChEBI" id="CHEBI:30013"/>
        <dbReference type="ChEBI" id="CHEBI:30616"/>
        <dbReference type="ChEBI" id="CHEBI:61977"/>
        <dbReference type="ChEBI" id="CHEBI:456216"/>
        <dbReference type="EC" id="2.7.11.1"/>
    </reaction>
</comment>
<comment type="similarity">
    <text evidence="5">Belongs to the protein kinase superfamily. CAMK Ser/Thr protein kinase family. SNF1 subfamily.</text>
</comment>
<organism>
    <name type="scientific">Dictyostelium discoideum</name>
    <name type="common">Social amoeba</name>
    <dbReference type="NCBI Taxonomy" id="44689"/>
    <lineage>
        <taxon>Eukaryota</taxon>
        <taxon>Amoebozoa</taxon>
        <taxon>Evosea</taxon>
        <taxon>Eumycetozoa</taxon>
        <taxon>Dictyostelia</taxon>
        <taxon>Dictyosteliales</taxon>
        <taxon>Dictyosteliaceae</taxon>
        <taxon>Dictyostelium</taxon>
    </lineage>
</organism>
<name>MRKA_DICDI</name>
<proteinExistence type="inferred from homology"/>
<sequence length="1060" mass="119681">METLKEEEQFRNFDTPLLNTPHHLKEETQIQQKEREQQQQQQQQLQQQLQLQNERENRNHNITEELNKIPSSNNSSNSSSPNPLSISVSSSLGSASSIHLTPQGTIGNYLVIKTIGRGQFGKVKLGYHKKIPNEKVAIKIINKGKLDPETLKMVQREVRIMKLLHHPNIIRLYEVIETSRALYLIMEYAGEGEVMDFMIAHGVLTESQARTFFTQIVSAINYCHSKRAVHRDLKPENLLLDCNRQIKIIDFGLSNVFTPGSYLKTFCGSPTYASPELILRKEYNGPSVDVWSMGVVLFVLVTGYLPFDGDNYVELFQKILAGNYTIPSYLTHECKSLISRMLVVDPDKRATMEEIINHPWLSSTKQIILSTTMTDSLKNLNSCLEQQINVENLLNQSLNNSNNNNINNINNINNTMATMNNSNNNNNNNNNNNNNNNNNNNNNNNNNNNNNNNNNNNNNNNNNNTTTTTNATTTTPITSPIQNRNNEELDQEIIEELVGLGFEREELCNSIRQNKYNDAASTYFLLQGKKLRESQQNQTDNAKKLEKFYSEPLTIPAHVGENSPLIKYKRHHKRSNTVDSPKSTNTPQYRSSNTQQNNHHHQQQQQQQQQQQQQHHHHTQQQNQQQSQQQYNNNNHNKPPTPTIVTTQASTTVNNHISINNNNNNNNNNNNNNNSSTPGSNTVSSTQSSSINSSVNPSPLCLSNAVPVSLREKLREKEATTTNTTTTTTTTTTTTTNTSSNNSSNQSISSISPPTSTSPNLQPFSLASTANNNNNNNNSNNNSNNNNNNNNNNNNSLNSHIQRRATASSLQQQQQMQQASNTRRLRSNSSSVADQSQRQESRKLEDDWVIFEDYSNDGHRDGQPKNYHLQPSSLSSHKKQKSPVHSFLSSFKNILKRSDDKSFNSSSSNNNTNNNNTTTSVSTNNTPRTLEVDHQNSNNNNQQATSSSPNVTSPSSPSQQQQQEPRIVRFVFGVNTTTMKDAPELMQQVLKVVDTFCIPHTKKAPFLIECETEGVRFSIEICRLPRLSVNGLKFKRIGGSSWRYKSICKDLLSQMKLNSH</sequence>
<feature type="chain" id="PRO_0000338409" description="Probable serine/threonine-protein kinase MARK-A">
    <location>
        <begin position="1"/>
        <end position="1060"/>
    </location>
</feature>
<feature type="domain" description="Protein kinase" evidence="1">
    <location>
        <begin position="109"/>
        <end position="361"/>
    </location>
</feature>
<feature type="domain" description="UBA" evidence="2">
    <location>
        <begin position="488"/>
        <end position="528"/>
    </location>
</feature>
<feature type="domain" description="KA1" evidence="3">
    <location>
        <begin position="1008"/>
        <end position="1057"/>
    </location>
</feature>
<feature type="region of interest" description="Disordered" evidence="4">
    <location>
        <begin position="1"/>
        <end position="52"/>
    </location>
</feature>
<feature type="region of interest" description="Disordered" evidence="4">
    <location>
        <begin position="67"/>
        <end position="88"/>
    </location>
</feature>
<feature type="region of interest" description="Disordered" evidence="4">
    <location>
        <begin position="409"/>
        <end position="488"/>
    </location>
</feature>
<feature type="region of interest" description="Disordered" evidence="4">
    <location>
        <begin position="560"/>
        <end position="701"/>
    </location>
</feature>
<feature type="region of interest" description="Disordered" evidence="4">
    <location>
        <begin position="714"/>
        <end position="886"/>
    </location>
</feature>
<feature type="region of interest" description="Disordered" evidence="4">
    <location>
        <begin position="899"/>
        <end position="966"/>
    </location>
</feature>
<feature type="compositionally biased region" description="Basic and acidic residues" evidence="4">
    <location>
        <begin position="1"/>
        <end position="11"/>
    </location>
</feature>
<feature type="compositionally biased region" description="Basic and acidic residues" evidence="4">
    <location>
        <begin position="23"/>
        <end position="37"/>
    </location>
</feature>
<feature type="compositionally biased region" description="Low complexity" evidence="4">
    <location>
        <begin position="38"/>
        <end position="52"/>
    </location>
</feature>
<feature type="compositionally biased region" description="Low complexity" evidence="4">
    <location>
        <begin position="68"/>
        <end position="88"/>
    </location>
</feature>
<feature type="compositionally biased region" description="Low complexity" evidence="4">
    <location>
        <begin position="409"/>
        <end position="475"/>
    </location>
</feature>
<feature type="compositionally biased region" description="Polar residues" evidence="4">
    <location>
        <begin position="577"/>
        <end position="594"/>
    </location>
</feature>
<feature type="compositionally biased region" description="Low complexity" evidence="4">
    <location>
        <begin position="603"/>
        <end position="613"/>
    </location>
</feature>
<feature type="compositionally biased region" description="Low complexity" evidence="4">
    <location>
        <begin position="620"/>
        <end position="637"/>
    </location>
</feature>
<feature type="compositionally biased region" description="Low complexity" evidence="4">
    <location>
        <begin position="650"/>
        <end position="699"/>
    </location>
</feature>
<feature type="compositionally biased region" description="Low complexity" evidence="4">
    <location>
        <begin position="720"/>
        <end position="760"/>
    </location>
</feature>
<feature type="compositionally biased region" description="Polar residues" evidence="4">
    <location>
        <begin position="761"/>
        <end position="770"/>
    </location>
</feature>
<feature type="compositionally biased region" description="Low complexity" evidence="4">
    <location>
        <begin position="771"/>
        <end position="799"/>
    </location>
</feature>
<feature type="compositionally biased region" description="Low complexity" evidence="4">
    <location>
        <begin position="811"/>
        <end position="831"/>
    </location>
</feature>
<feature type="compositionally biased region" description="Basic and acidic residues" evidence="4">
    <location>
        <begin position="837"/>
        <end position="846"/>
    </location>
</feature>
<feature type="compositionally biased region" description="Low complexity" evidence="4">
    <location>
        <begin position="904"/>
        <end position="926"/>
    </location>
</feature>
<feature type="compositionally biased region" description="Low complexity" evidence="4">
    <location>
        <begin position="935"/>
        <end position="965"/>
    </location>
</feature>
<feature type="active site" description="Proton acceptor" evidence="1">
    <location>
        <position position="232"/>
    </location>
</feature>
<feature type="binding site" evidence="1">
    <location>
        <begin position="115"/>
        <end position="123"/>
    </location>
    <ligand>
        <name>ATP</name>
        <dbReference type="ChEBI" id="CHEBI:30616"/>
    </ligand>
</feature>
<feature type="binding site" evidence="1">
    <location>
        <position position="139"/>
    </location>
    <ligand>
        <name>ATP</name>
        <dbReference type="ChEBI" id="CHEBI:30616"/>
    </ligand>
</feature>
<protein>
    <recommendedName>
        <fullName>Probable serine/threonine-protein kinase MARK-A</fullName>
        <ecNumber>2.7.11.1</ecNumber>
    </recommendedName>
</protein>
<accession>Q54DF2</accession>